<comment type="similarity">
    <text evidence="1">Belongs to the UPF0342 family.</text>
</comment>
<keyword id="KW-1185">Reference proteome</keyword>
<feature type="chain" id="PRO_0000292741" description="UPF0342 protein SAOUHSC_01977">
    <location>
        <begin position="1"/>
        <end position="114"/>
    </location>
</feature>
<reference key="1">
    <citation type="book" date="2006" name="Gram positive pathogens, 2nd edition">
        <title>The Staphylococcus aureus NCTC 8325 genome.</title>
        <editorList>
            <person name="Fischetti V."/>
            <person name="Novick R."/>
            <person name="Ferretti J."/>
            <person name="Portnoy D."/>
            <person name="Rood J."/>
        </editorList>
        <authorList>
            <person name="Gillaspy A.F."/>
            <person name="Worrell V."/>
            <person name="Orvis J."/>
            <person name="Roe B.A."/>
            <person name="Dyer D.W."/>
            <person name="Iandolo J.J."/>
        </authorList>
    </citation>
    <scope>NUCLEOTIDE SEQUENCE [LARGE SCALE GENOMIC DNA]</scope>
    <source>
        <strain>NCTC 8325 / PS 47</strain>
    </source>
</reference>
<organism>
    <name type="scientific">Staphylococcus aureus (strain NCTC 8325 / PS 47)</name>
    <dbReference type="NCBI Taxonomy" id="93061"/>
    <lineage>
        <taxon>Bacteria</taxon>
        <taxon>Bacillati</taxon>
        <taxon>Bacillota</taxon>
        <taxon>Bacilli</taxon>
        <taxon>Bacillales</taxon>
        <taxon>Staphylococcaceae</taxon>
        <taxon>Staphylococcus</taxon>
    </lineage>
</organism>
<accession>Q2FXA0</accession>
<protein>
    <recommendedName>
        <fullName evidence="1">UPF0342 protein SAOUHSC_01977</fullName>
    </recommendedName>
</protein>
<name>Y1977_STAA8</name>
<evidence type="ECO:0000255" key="1">
    <source>
        <dbReference type="HAMAP-Rule" id="MF_01526"/>
    </source>
</evidence>
<gene>
    <name type="ordered locus">SAOUHSC_01977</name>
</gene>
<dbReference type="EMBL" id="CP000253">
    <property type="protein sequence ID" value="ABD31036.1"/>
    <property type="molecule type" value="Genomic_DNA"/>
</dbReference>
<dbReference type="RefSeq" id="WP_000290301.1">
    <property type="nucleotide sequence ID" value="NZ_LS483365.1"/>
</dbReference>
<dbReference type="RefSeq" id="YP_500474.1">
    <property type="nucleotide sequence ID" value="NC_007795.1"/>
</dbReference>
<dbReference type="SMR" id="Q2FXA0"/>
<dbReference type="STRING" id="93061.SAOUHSC_01977"/>
<dbReference type="PaxDb" id="1280-SAXN108_1874"/>
<dbReference type="GeneID" id="3920453"/>
<dbReference type="KEGG" id="sao:SAOUHSC_01977"/>
<dbReference type="PATRIC" id="fig|93061.5.peg.1798"/>
<dbReference type="eggNOG" id="COG3679">
    <property type="taxonomic scope" value="Bacteria"/>
</dbReference>
<dbReference type="HOGENOM" id="CLU_140243_3_0_9"/>
<dbReference type="OrthoDB" id="9811402at2"/>
<dbReference type="PRO" id="PR:Q2FXA0"/>
<dbReference type="Proteomes" id="UP000008816">
    <property type="component" value="Chromosome"/>
</dbReference>
<dbReference type="Gene3D" id="1.20.1500.10">
    <property type="entry name" value="YheA/YmcA-like"/>
    <property type="match status" value="1"/>
</dbReference>
<dbReference type="HAMAP" id="MF_01526">
    <property type="entry name" value="UPF0342"/>
    <property type="match status" value="1"/>
</dbReference>
<dbReference type="InterPro" id="IPR010368">
    <property type="entry name" value="Com_YlbF"/>
</dbReference>
<dbReference type="InterPro" id="IPR023378">
    <property type="entry name" value="YheA/YmcA-like_dom_sf"/>
</dbReference>
<dbReference type="NCBIfam" id="NF010212">
    <property type="entry name" value="PRK13676.1-5"/>
    <property type="match status" value="1"/>
</dbReference>
<dbReference type="Pfam" id="PF06133">
    <property type="entry name" value="Com_YlbF"/>
    <property type="match status" value="1"/>
</dbReference>
<dbReference type="SUPFAM" id="SSF158622">
    <property type="entry name" value="YheA/YmcA-like"/>
    <property type="match status" value="1"/>
</dbReference>
<sequence length="114" mass="13310">MAVNLYDYANQLEQALRESEEYKAIKEAFANVKANEESKKLFDEFRETQINFQQKQMQGEEIAEEDLQKAQEQAQAIEKDENISALMNAEQKMSQVFQEINQIIVKPLDEIYAD</sequence>
<proteinExistence type="inferred from homology"/>